<feature type="chain" id="PRO_0000110660" description="UPF0358 protein SSP1677">
    <location>
        <begin position="1"/>
        <end position="91"/>
    </location>
</feature>
<gene>
    <name type="ordered locus">SSP1677</name>
</gene>
<proteinExistence type="inferred from homology"/>
<name>Y1677_STAS1</name>
<accession>Q49WN7</accession>
<protein>
    <recommendedName>
        <fullName evidence="1">UPF0358 protein SSP1677</fullName>
    </recommendedName>
</protein>
<sequence>MEKNQKINNAAYDQLNKDADRILQLIKVQMDNLTLPQCPLYEEVLDTQMFGLQKEVDFAVQLGLVDREVGKDLMLRLEKELSKLHDAFTNV</sequence>
<evidence type="ECO:0000255" key="1">
    <source>
        <dbReference type="HAMAP-Rule" id="MF_01560"/>
    </source>
</evidence>
<keyword id="KW-1185">Reference proteome</keyword>
<dbReference type="EMBL" id="AP008934">
    <property type="protein sequence ID" value="BAE18822.1"/>
    <property type="molecule type" value="Genomic_DNA"/>
</dbReference>
<dbReference type="RefSeq" id="WP_002483658.1">
    <property type="nucleotide sequence ID" value="NZ_MTGA01000039.1"/>
</dbReference>
<dbReference type="SMR" id="Q49WN7"/>
<dbReference type="KEGG" id="ssp:SSP1677"/>
<dbReference type="eggNOG" id="COG4838">
    <property type="taxonomic scope" value="Bacteria"/>
</dbReference>
<dbReference type="HOGENOM" id="CLU_160493_1_0_9"/>
<dbReference type="OrthoDB" id="2135235at2"/>
<dbReference type="Proteomes" id="UP000006371">
    <property type="component" value="Chromosome"/>
</dbReference>
<dbReference type="Gene3D" id="1.10.287.750">
    <property type="entry name" value="SO2669-like"/>
    <property type="match status" value="1"/>
</dbReference>
<dbReference type="HAMAP" id="MF_01560">
    <property type="entry name" value="UPF0358"/>
    <property type="match status" value="1"/>
</dbReference>
<dbReference type="InterPro" id="IPR009983">
    <property type="entry name" value="UPF0358"/>
</dbReference>
<dbReference type="InterPro" id="IPR036270">
    <property type="entry name" value="UPF0358_sf"/>
</dbReference>
<dbReference type="NCBIfam" id="NF010187">
    <property type="entry name" value="PRK13666.1"/>
    <property type="match status" value="1"/>
</dbReference>
<dbReference type="Pfam" id="PF07408">
    <property type="entry name" value="DUF1507"/>
    <property type="match status" value="1"/>
</dbReference>
<dbReference type="SUPFAM" id="SSF140404">
    <property type="entry name" value="EF2458-like"/>
    <property type="match status" value="1"/>
</dbReference>
<comment type="similarity">
    <text evidence="1">Belongs to the UPF0358 family.</text>
</comment>
<organism>
    <name type="scientific">Staphylococcus saprophyticus subsp. saprophyticus (strain ATCC 15305 / DSM 20229 / NCIMB 8711 / NCTC 7292 / S-41)</name>
    <dbReference type="NCBI Taxonomy" id="342451"/>
    <lineage>
        <taxon>Bacteria</taxon>
        <taxon>Bacillati</taxon>
        <taxon>Bacillota</taxon>
        <taxon>Bacilli</taxon>
        <taxon>Bacillales</taxon>
        <taxon>Staphylococcaceae</taxon>
        <taxon>Staphylococcus</taxon>
    </lineage>
</organism>
<reference key="1">
    <citation type="journal article" date="2005" name="Proc. Natl. Acad. Sci. U.S.A.">
        <title>Whole genome sequence of Staphylococcus saprophyticus reveals the pathogenesis of uncomplicated urinary tract infection.</title>
        <authorList>
            <person name="Kuroda M."/>
            <person name="Yamashita A."/>
            <person name="Hirakawa H."/>
            <person name="Kumano M."/>
            <person name="Morikawa K."/>
            <person name="Higashide M."/>
            <person name="Maruyama A."/>
            <person name="Inose Y."/>
            <person name="Matoba K."/>
            <person name="Toh H."/>
            <person name="Kuhara S."/>
            <person name="Hattori M."/>
            <person name="Ohta T."/>
        </authorList>
    </citation>
    <scope>NUCLEOTIDE SEQUENCE [LARGE SCALE GENOMIC DNA]</scope>
    <source>
        <strain>ATCC 15305 / DSM 20229 / NCIMB 8711 / NCTC 7292 / S-41</strain>
    </source>
</reference>